<dbReference type="EMBL" id="DP000010">
    <property type="protein sequence ID" value="ABA94997.1"/>
    <property type="molecule type" value="Genomic_DNA"/>
</dbReference>
<dbReference type="EMBL" id="AP008217">
    <property type="status" value="NOT_ANNOTATED_CDS"/>
    <property type="molecule type" value="Genomic_DNA"/>
</dbReference>
<dbReference type="EMBL" id="AP014967">
    <property type="status" value="NOT_ANNOTATED_CDS"/>
    <property type="molecule type" value="Genomic_DNA"/>
</dbReference>
<dbReference type="EMBL" id="CM000138">
    <property type="protein sequence ID" value="EAZ11767.1"/>
    <property type="molecule type" value="Genomic_DNA"/>
</dbReference>
<dbReference type="EMBL" id="AK287600">
    <property type="status" value="NOT_ANNOTATED_CDS"/>
    <property type="molecule type" value="mRNA"/>
</dbReference>
<dbReference type="FunCoup" id="Q2R0D4">
    <property type="interactions" value="126"/>
</dbReference>
<dbReference type="PaxDb" id="39947-Q2R0D4"/>
<dbReference type="eggNOG" id="ENOG502R3UQ">
    <property type="taxonomic scope" value="Eukaryota"/>
</dbReference>
<dbReference type="HOGENOM" id="CLU_1605119_0_0_1"/>
<dbReference type="InParanoid" id="Q2R0D4"/>
<dbReference type="Proteomes" id="UP000000763">
    <property type="component" value="Chromosome 11"/>
</dbReference>
<dbReference type="Proteomes" id="UP000007752">
    <property type="component" value="Chromosome 1"/>
</dbReference>
<dbReference type="Proteomes" id="UP000059680">
    <property type="component" value="Chromosome 11"/>
</dbReference>
<dbReference type="GO" id="GO:0005886">
    <property type="term" value="C:plasma membrane"/>
    <property type="evidence" value="ECO:0007669"/>
    <property type="project" value="UniProtKB-SubCell"/>
</dbReference>
<dbReference type="InterPro" id="IPR006459">
    <property type="entry name" value="CASP/CASPL"/>
</dbReference>
<dbReference type="InterPro" id="IPR006702">
    <property type="entry name" value="CASP_dom"/>
</dbReference>
<dbReference type="InterPro" id="IPR044173">
    <property type="entry name" value="CASPL"/>
</dbReference>
<dbReference type="NCBIfam" id="TIGR01569">
    <property type="entry name" value="A_tha_TIGR01569"/>
    <property type="match status" value="1"/>
</dbReference>
<dbReference type="PANTHER" id="PTHR36488">
    <property type="entry name" value="CASP-LIKE PROTEIN 1U1"/>
    <property type="match status" value="1"/>
</dbReference>
<dbReference type="PANTHER" id="PTHR36488:SF8">
    <property type="entry name" value="CASP-LIKE PROTEIN 1U1"/>
    <property type="match status" value="1"/>
</dbReference>
<dbReference type="Pfam" id="PF04535">
    <property type="entry name" value="CASP_dom"/>
    <property type="match status" value="1"/>
</dbReference>
<sequence length="168" mass="17188">MDGAARAVSLFFRIAVVGLSVAAAVVMATASQAFPFNYGGAVSYTKYPAFVYFVVAAVVSAVCSAAALYLSVVREAAAGWAVALLDVVTMGLLFSAAGAVFAVRRMAPLYLGVAGADTVAGRWVNGEFCHAAGAFCWRVTTSAIICAFAAAAVSVAVLTKGARHRGKH</sequence>
<evidence type="ECO:0000250" key="1"/>
<evidence type="ECO:0000255" key="2"/>
<evidence type="ECO:0000305" key="3"/>
<gene>
    <name type="ordered locus">Os11g0649400</name>
    <name type="ordered locus">LOC_Os11g42940</name>
    <name type="ORF">OsJ_01636</name>
</gene>
<feature type="chain" id="PRO_0000391593" description="CASP-like protein 1U1">
    <location>
        <begin position="1"/>
        <end position="168"/>
    </location>
</feature>
<feature type="topological domain" description="Cytoplasmic" evidence="2">
    <location>
        <begin position="1"/>
        <end position="6"/>
    </location>
</feature>
<feature type="transmembrane region" description="Helical" evidence="2">
    <location>
        <begin position="7"/>
        <end position="27"/>
    </location>
</feature>
<feature type="topological domain" description="Extracellular" evidence="2">
    <location>
        <begin position="28"/>
        <end position="49"/>
    </location>
</feature>
<feature type="transmembrane region" description="Helical" evidence="2">
    <location>
        <begin position="50"/>
        <end position="70"/>
    </location>
</feature>
<feature type="topological domain" description="Cytoplasmic" evidence="2">
    <location>
        <begin position="71"/>
        <end position="80"/>
    </location>
</feature>
<feature type="transmembrane region" description="Helical" evidence="2">
    <location>
        <begin position="81"/>
        <end position="101"/>
    </location>
</feature>
<feature type="topological domain" description="Extracellular" evidence="2">
    <location>
        <begin position="102"/>
        <end position="138"/>
    </location>
</feature>
<feature type="transmembrane region" description="Helical" evidence="2">
    <location>
        <begin position="139"/>
        <end position="159"/>
    </location>
</feature>
<feature type="topological domain" description="Cytoplasmic" evidence="2">
    <location>
        <begin position="160"/>
        <end position="168"/>
    </location>
</feature>
<keyword id="KW-1003">Cell membrane</keyword>
<keyword id="KW-0472">Membrane</keyword>
<keyword id="KW-1185">Reference proteome</keyword>
<keyword id="KW-0812">Transmembrane</keyword>
<keyword id="KW-1133">Transmembrane helix</keyword>
<protein>
    <recommendedName>
        <fullName>CASP-like protein 1U1</fullName>
        <shortName>OsCASPL1U1</shortName>
    </recommendedName>
</protein>
<organism>
    <name type="scientific">Oryza sativa subsp. japonica</name>
    <name type="common">Rice</name>
    <dbReference type="NCBI Taxonomy" id="39947"/>
    <lineage>
        <taxon>Eukaryota</taxon>
        <taxon>Viridiplantae</taxon>
        <taxon>Streptophyta</taxon>
        <taxon>Embryophyta</taxon>
        <taxon>Tracheophyta</taxon>
        <taxon>Spermatophyta</taxon>
        <taxon>Magnoliopsida</taxon>
        <taxon>Liliopsida</taxon>
        <taxon>Poales</taxon>
        <taxon>Poaceae</taxon>
        <taxon>BOP clade</taxon>
        <taxon>Oryzoideae</taxon>
        <taxon>Oryzeae</taxon>
        <taxon>Oryzinae</taxon>
        <taxon>Oryza</taxon>
        <taxon>Oryza sativa</taxon>
    </lineage>
</organism>
<reference key="1">
    <citation type="journal article" date="2005" name="BMC Biol.">
        <title>The sequence of rice chromosomes 11 and 12, rich in disease resistance genes and recent gene duplications.</title>
        <authorList>
            <consortium name="The rice chromosomes 11 and 12 sequencing consortia"/>
        </authorList>
    </citation>
    <scope>NUCLEOTIDE SEQUENCE [LARGE SCALE GENOMIC DNA]</scope>
    <source>
        <strain>cv. Nipponbare</strain>
    </source>
</reference>
<reference key="2">
    <citation type="journal article" date="2005" name="Nature">
        <title>The map-based sequence of the rice genome.</title>
        <authorList>
            <consortium name="International rice genome sequencing project (IRGSP)"/>
        </authorList>
    </citation>
    <scope>NUCLEOTIDE SEQUENCE [LARGE SCALE GENOMIC DNA]</scope>
    <source>
        <strain>cv. Nipponbare</strain>
    </source>
</reference>
<reference key="3">
    <citation type="journal article" date="2008" name="Nucleic Acids Res.">
        <title>The rice annotation project database (RAP-DB): 2008 update.</title>
        <authorList>
            <consortium name="The rice annotation project (RAP)"/>
        </authorList>
    </citation>
    <scope>GENOME REANNOTATION</scope>
    <source>
        <strain>cv. Nipponbare</strain>
    </source>
</reference>
<reference key="4">
    <citation type="journal article" date="2013" name="Rice">
        <title>Improvement of the Oryza sativa Nipponbare reference genome using next generation sequence and optical map data.</title>
        <authorList>
            <person name="Kawahara Y."/>
            <person name="de la Bastide M."/>
            <person name="Hamilton J.P."/>
            <person name="Kanamori H."/>
            <person name="McCombie W.R."/>
            <person name="Ouyang S."/>
            <person name="Schwartz D.C."/>
            <person name="Tanaka T."/>
            <person name="Wu J."/>
            <person name="Zhou S."/>
            <person name="Childs K.L."/>
            <person name="Davidson R.M."/>
            <person name="Lin H."/>
            <person name="Quesada-Ocampo L."/>
            <person name="Vaillancourt B."/>
            <person name="Sakai H."/>
            <person name="Lee S.S."/>
            <person name="Kim J."/>
            <person name="Numa H."/>
            <person name="Itoh T."/>
            <person name="Buell C.R."/>
            <person name="Matsumoto T."/>
        </authorList>
    </citation>
    <scope>GENOME REANNOTATION</scope>
    <source>
        <strain>cv. Nipponbare</strain>
    </source>
</reference>
<reference key="5">
    <citation type="journal article" date="2005" name="PLoS Biol.">
        <title>The genomes of Oryza sativa: a history of duplications.</title>
        <authorList>
            <person name="Yu J."/>
            <person name="Wang J."/>
            <person name="Lin W."/>
            <person name="Li S."/>
            <person name="Li H."/>
            <person name="Zhou J."/>
            <person name="Ni P."/>
            <person name="Dong W."/>
            <person name="Hu S."/>
            <person name="Zeng C."/>
            <person name="Zhang J."/>
            <person name="Zhang Y."/>
            <person name="Li R."/>
            <person name="Xu Z."/>
            <person name="Li S."/>
            <person name="Li X."/>
            <person name="Zheng H."/>
            <person name="Cong L."/>
            <person name="Lin L."/>
            <person name="Yin J."/>
            <person name="Geng J."/>
            <person name="Li G."/>
            <person name="Shi J."/>
            <person name="Liu J."/>
            <person name="Lv H."/>
            <person name="Li J."/>
            <person name="Wang J."/>
            <person name="Deng Y."/>
            <person name="Ran L."/>
            <person name="Shi X."/>
            <person name="Wang X."/>
            <person name="Wu Q."/>
            <person name="Li C."/>
            <person name="Ren X."/>
            <person name="Wang J."/>
            <person name="Wang X."/>
            <person name="Li D."/>
            <person name="Liu D."/>
            <person name="Zhang X."/>
            <person name="Ji Z."/>
            <person name="Zhao W."/>
            <person name="Sun Y."/>
            <person name="Zhang Z."/>
            <person name="Bao J."/>
            <person name="Han Y."/>
            <person name="Dong L."/>
            <person name="Ji J."/>
            <person name="Chen P."/>
            <person name="Wu S."/>
            <person name="Liu J."/>
            <person name="Xiao Y."/>
            <person name="Bu D."/>
            <person name="Tan J."/>
            <person name="Yang L."/>
            <person name="Ye C."/>
            <person name="Zhang J."/>
            <person name="Xu J."/>
            <person name="Zhou Y."/>
            <person name="Yu Y."/>
            <person name="Zhang B."/>
            <person name="Zhuang S."/>
            <person name="Wei H."/>
            <person name="Liu B."/>
            <person name="Lei M."/>
            <person name="Yu H."/>
            <person name="Li Y."/>
            <person name="Xu H."/>
            <person name="Wei S."/>
            <person name="He X."/>
            <person name="Fang L."/>
            <person name="Zhang Z."/>
            <person name="Zhang Y."/>
            <person name="Huang X."/>
            <person name="Su Z."/>
            <person name="Tong W."/>
            <person name="Li J."/>
            <person name="Tong Z."/>
            <person name="Li S."/>
            <person name="Ye J."/>
            <person name="Wang L."/>
            <person name="Fang L."/>
            <person name="Lei T."/>
            <person name="Chen C.-S."/>
            <person name="Chen H.-C."/>
            <person name="Xu Z."/>
            <person name="Li H."/>
            <person name="Huang H."/>
            <person name="Zhang F."/>
            <person name="Xu H."/>
            <person name="Li N."/>
            <person name="Zhao C."/>
            <person name="Li S."/>
            <person name="Dong L."/>
            <person name="Huang Y."/>
            <person name="Li L."/>
            <person name="Xi Y."/>
            <person name="Qi Q."/>
            <person name="Li W."/>
            <person name="Zhang B."/>
            <person name="Hu W."/>
            <person name="Zhang Y."/>
            <person name="Tian X."/>
            <person name="Jiao Y."/>
            <person name="Liang X."/>
            <person name="Jin J."/>
            <person name="Gao L."/>
            <person name="Zheng W."/>
            <person name="Hao B."/>
            <person name="Liu S.-M."/>
            <person name="Wang W."/>
            <person name="Yuan L."/>
            <person name="Cao M."/>
            <person name="McDermott J."/>
            <person name="Samudrala R."/>
            <person name="Wang J."/>
            <person name="Wong G.K.-S."/>
            <person name="Yang H."/>
        </authorList>
    </citation>
    <scope>NUCLEOTIDE SEQUENCE [LARGE SCALE GENOMIC DNA]</scope>
    <source>
        <strain>cv. Nipponbare</strain>
    </source>
</reference>
<reference key="6">
    <citation type="submission" date="2007-09" db="EMBL/GenBank/DDBJ databases">
        <title>Oryza sativa full length cDNA.</title>
        <authorList>
            <consortium name="The rice full-length cDNA consortium"/>
        </authorList>
    </citation>
    <scope>NUCLEOTIDE SEQUENCE [LARGE SCALE MRNA]</scope>
    <source>
        <strain>cv. Nipponbare</strain>
    </source>
</reference>
<reference key="7">
    <citation type="journal article" date="2014" name="Plant Physiol.">
        <title>Functional and evolutionary analysis of the CASPARIAN STRIP MEMBRANE DOMAIN PROTEIN family.</title>
        <authorList>
            <person name="Roppolo D."/>
            <person name="Boeckmann B."/>
            <person name="Pfister A."/>
            <person name="Boutet E."/>
            <person name="Rubio M.C."/>
            <person name="Denervaud-Tendon V."/>
            <person name="Vermeer J.E."/>
            <person name="Gheyselinck J."/>
            <person name="Xenarios I."/>
            <person name="Geldner N."/>
        </authorList>
    </citation>
    <scope>GENE FAMILY</scope>
    <scope>NOMENCLATURE</scope>
</reference>
<comment type="subunit">
    <text evidence="1">Homodimer and heterodimers.</text>
</comment>
<comment type="subcellular location">
    <subcellularLocation>
        <location evidence="1">Cell membrane</location>
        <topology evidence="1">Multi-pass membrane protein</topology>
    </subcellularLocation>
</comment>
<comment type="similarity">
    <text evidence="3">Belongs to the Casparian strip membrane proteins (CASP) family.</text>
</comment>
<name>CSPLI_ORYSJ</name>
<accession>Q2R0D4</accession>
<proteinExistence type="evidence at transcript level"/>